<reference key="1">
    <citation type="online journal article" date="1999" name="Plant Gene Register">
        <title>Nucleotide sequences of cDNAs encoding three types of metallothionein(MT)-like protein from Oryza sativa L.</title>
        <authorList>
            <person name="Kim Y.H."/>
            <person name="Lee M.C."/>
            <person name="Yun D.W."/>
            <person name="Eun M.Y."/>
        </authorList>
        <locator>PGR99-019</locator>
    </citation>
    <scope>NUCLEOTIDE SEQUENCE [MRNA]</scope>
    <source>
        <strain>cv. Milyang 23</strain>
        <tissue>Immature seed</tissue>
    </source>
</reference>
<reference key="2">
    <citation type="journal article" date="2005" name="PLoS Biol.">
        <title>The genomes of Oryza sativa: a history of duplications.</title>
        <authorList>
            <person name="Yu J."/>
            <person name="Wang J."/>
            <person name="Lin W."/>
            <person name="Li S."/>
            <person name="Li H."/>
            <person name="Zhou J."/>
            <person name="Ni P."/>
            <person name="Dong W."/>
            <person name="Hu S."/>
            <person name="Zeng C."/>
            <person name="Zhang J."/>
            <person name="Zhang Y."/>
            <person name="Li R."/>
            <person name="Xu Z."/>
            <person name="Li S."/>
            <person name="Li X."/>
            <person name="Zheng H."/>
            <person name="Cong L."/>
            <person name="Lin L."/>
            <person name="Yin J."/>
            <person name="Geng J."/>
            <person name="Li G."/>
            <person name="Shi J."/>
            <person name="Liu J."/>
            <person name="Lv H."/>
            <person name="Li J."/>
            <person name="Wang J."/>
            <person name="Deng Y."/>
            <person name="Ran L."/>
            <person name="Shi X."/>
            <person name="Wang X."/>
            <person name="Wu Q."/>
            <person name="Li C."/>
            <person name="Ren X."/>
            <person name="Wang J."/>
            <person name="Wang X."/>
            <person name="Li D."/>
            <person name="Liu D."/>
            <person name="Zhang X."/>
            <person name="Ji Z."/>
            <person name="Zhao W."/>
            <person name="Sun Y."/>
            <person name="Zhang Z."/>
            <person name="Bao J."/>
            <person name="Han Y."/>
            <person name="Dong L."/>
            <person name="Ji J."/>
            <person name="Chen P."/>
            <person name="Wu S."/>
            <person name="Liu J."/>
            <person name="Xiao Y."/>
            <person name="Bu D."/>
            <person name="Tan J."/>
            <person name="Yang L."/>
            <person name="Ye C."/>
            <person name="Zhang J."/>
            <person name="Xu J."/>
            <person name="Zhou Y."/>
            <person name="Yu Y."/>
            <person name="Zhang B."/>
            <person name="Zhuang S."/>
            <person name="Wei H."/>
            <person name="Liu B."/>
            <person name="Lei M."/>
            <person name="Yu H."/>
            <person name="Li Y."/>
            <person name="Xu H."/>
            <person name="Wei S."/>
            <person name="He X."/>
            <person name="Fang L."/>
            <person name="Zhang Z."/>
            <person name="Zhang Y."/>
            <person name="Huang X."/>
            <person name="Su Z."/>
            <person name="Tong W."/>
            <person name="Li J."/>
            <person name="Tong Z."/>
            <person name="Li S."/>
            <person name="Ye J."/>
            <person name="Wang L."/>
            <person name="Fang L."/>
            <person name="Lei T."/>
            <person name="Chen C.-S."/>
            <person name="Chen H.-C."/>
            <person name="Xu Z."/>
            <person name="Li H."/>
            <person name="Huang H."/>
            <person name="Zhang F."/>
            <person name="Xu H."/>
            <person name="Li N."/>
            <person name="Zhao C."/>
            <person name="Li S."/>
            <person name="Dong L."/>
            <person name="Huang Y."/>
            <person name="Li L."/>
            <person name="Xi Y."/>
            <person name="Qi Q."/>
            <person name="Li W."/>
            <person name="Zhang B."/>
            <person name="Hu W."/>
            <person name="Zhang Y."/>
            <person name="Tian X."/>
            <person name="Jiao Y."/>
            <person name="Liang X."/>
            <person name="Jin J."/>
            <person name="Gao L."/>
            <person name="Zheng W."/>
            <person name="Hao B."/>
            <person name="Liu S.-M."/>
            <person name="Wang W."/>
            <person name="Yuan L."/>
            <person name="Cao M."/>
            <person name="McDermott J."/>
            <person name="Samudrala R."/>
            <person name="Wang J."/>
            <person name="Wong G.K.-S."/>
            <person name="Yang H."/>
        </authorList>
    </citation>
    <scope>NUCLEOTIDE SEQUENCE [LARGE SCALE GENOMIC DNA]</scope>
    <source>
        <strain>cv. 93-11</strain>
    </source>
</reference>
<reference key="3">
    <citation type="journal article" date="2006" name="J. Biochem. Mol. Biol.">
        <title>Molecular analyses of the metallothionein gene family in rice (Oryza sativa L.).</title>
        <authorList>
            <person name="Zhou G."/>
            <person name="Xu Y."/>
            <person name="Li J."/>
            <person name="Yang L."/>
            <person name="Liu J.-Y."/>
        </authorList>
    </citation>
    <scope>GENE FAMILY</scope>
</reference>
<gene>
    <name type="primary">MT3B</name>
    <name type="ORF">OsI_018130</name>
</gene>
<protein>
    <recommendedName>
        <fullName>Metallothionein-like protein 3B</fullName>
    </recommendedName>
    <alternativeName>
        <fullName>Class I metallothionein-like protein 3B</fullName>
    </alternativeName>
    <alternativeName>
        <fullName>OsMT-I-3b</fullName>
    </alternativeName>
</protein>
<proteinExistence type="inferred from homology"/>
<feature type="chain" id="PRO_0000296356" description="Metallothionein-like protein 3B">
    <location>
        <begin position="1"/>
        <end position="65"/>
    </location>
</feature>
<feature type="sequence conflict" description="In Ref. 1; AAB65698." evidence="1" ref="1">
    <original>H</original>
    <variation>N</variation>
    <location>
        <position position="7"/>
    </location>
</feature>
<feature type="sequence conflict" description="In Ref. 1; AAB65698." evidence="1" ref="1">
    <original>I</original>
    <variation>L</variation>
    <location>
        <position position="27"/>
    </location>
</feature>
<feature type="sequence conflict" description="In Ref. 1; AAB65698." evidence="1" ref="1">
    <original>K</original>
    <variation>G</variation>
    <location>
        <position position="49"/>
    </location>
</feature>
<keyword id="KW-0479">Metal-binding</keyword>
<keyword id="KW-0480">Metal-thiolate cluster</keyword>
<keyword id="KW-1185">Reference proteome</keyword>
<accession>A2Y1D7</accession>
<accession>O22376</accession>
<accession>Q6ATL2</accession>
<comment type="function">
    <text evidence="1">Metallothioneins have a high content of cysteine residues that bind various heavy metals.</text>
</comment>
<comment type="similarity">
    <text evidence="1">Belongs to the metallothionein superfamily. Type 15 family.</text>
</comment>
<comment type="sequence caution" evidence="1">
    <conflict type="frameshift">
        <sequence resource="EMBL-CDS" id="AAB65698"/>
    </conflict>
</comment>
<name>MT3B_ORYSI</name>
<evidence type="ECO:0000305" key="1"/>
<sequence length="65" mass="6880">MSDKCGHCDCADKSQCVKKGTSYGVVIVDAEKSHFEMAEEVGYEENDGKCKCTTGCSCAGCNCGK</sequence>
<organism>
    <name type="scientific">Oryza sativa subsp. indica</name>
    <name type="common">Rice</name>
    <dbReference type="NCBI Taxonomy" id="39946"/>
    <lineage>
        <taxon>Eukaryota</taxon>
        <taxon>Viridiplantae</taxon>
        <taxon>Streptophyta</taxon>
        <taxon>Embryophyta</taxon>
        <taxon>Tracheophyta</taxon>
        <taxon>Spermatophyta</taxon>
        <taxon>Magnoliopsida</taxon>
        <taxon>Liliopsida</taxon>
        <taxon>Poales</taxon>
        <taxon>Poaceae</taxon>
        <taxon>BOP clade</taxon>
        <taxon>Oryzoideae</taxon>
        <taxon>Oryzeae</taxon>
        <taxon>Oryzinae</taxon>
        <taxon>Oryza</taxon>
        <taxon>Oryza sativa</taxon>
    </lineage>
</organism>
<dbReference type="EMBL" id="AF009959">
    <property type="protein sequence ID" value="AAB65698.1"/>
    <property type="status" value="ALT_FRAME"/>
    <property type="molecule type" value="mRNA"/>
</dbReference>
<dbReference type="EMBL" id="CM000130">
    <property type="protein sequence ID" value="EAY96897.1"/>
    <property type="molecule type" value="Genomic_DNA"/>
</dbReference>
<dbReference type="EnsemblPlants" id="BGIOSGA019338-TA">
    <property type="protein sequence ID" value="BGIOSGA019338-PA"/>
    <property type="gene ID" value="BGIOSGA019338"/>
</dbReference>
<dbReference type="EnsemblPlants" id="OsIR64_05g0006680.01">
    <property type="protein sequence ID" value="OsIR64_05g0006680.01"/>
    <property type="gene ID" value="OsIR64_05g0006680"/>
</dbReference>
<dbReference type="EnsemblPlants" id="OsZS97_05G006870_01">
    <property type="protein sequence ID" value="OsZS97_05G006870_01"/>
    <property type="gene ID" value="OsZS97_05G006870"/>
</dbReference>
<dbReference type="Gramene" id="BGIOSGA019338-TA">
    <property type="protein sequence ID" value="BGIOSGA019338-PA"/>
    <property type="gene ID" value="BGIOSGA019338"/>
</dbReference>
<dbReference type="Gramene" id="OsIR64_05g0006680.01">
    <property type="protein sequence ID" value="OsIR64_05g0006680.01"/>
    <property type="gene ID" value="OsIR64_05g0006680"/>
</dbReference>
<dbReference type="Gramene" id="OsZS97_05G006870_01">
    <property type="protein sequence ID" value="OsZS97_05G006870_01"/>
    <property type="gene ID" value="OsZS97_05G006870"/>
</dbReference>
<dbReference type="HOGENOM" id="CLU_204176_0_0_1"/>
<dbReference type="OMA" id="QCKCGST"/>
<dbReference type="Proteomes" id="UP000007015">
    <property type="component" value="Chromosome 5"/>
</dbReference>
<dbReference type="GO" id="GO:0005507">
    <property type="term" value="F:copper ion binding"/>
    <property type="evidence" value="ECO:0007669"/>
    <property type="project" value="InterPro"/>
</dbReference>
<dbReference type="GO" id="GO:0008270">
    <property type="term" value="F:zinc ion binding"/>
    <property type="evidence" value="ECO:0007669"/>
    <property type="project" value="InterPro"/>
</dbReference>
<dbReference type="GO" id="GO:0006878">
    <property type="term" value="P:intracellular copper ion homeostasis"/>
    <property type="evidence" value="ECO:0007669"/>
    <property type="project" value="InterPro"/>
</dbReference>
<dbReference type="InterPro" id="IPR044671">
    <property type="entry name" value="MT3"/>
</dbReference>
<dbReference type="PANTHER" id="PTHR33357">
    <property type="entry name" value="METALLOTHIONEIN-LIKE PROTEIN 3"/>
    <property type="match status" value="1"/>
</dbReference>
<dbReference type="PANTHER" id="PTHR33357:SF3">
    <property type="entry name" value="METALLOTHIONEIN-LIKE PROTEIN 3"/>
    <property type="match status" value="1"/>
</dbReference>